<name>CARB_CLASE</name>
<feature type="chain" id="PRO_1000085555" description="Carbamoyl phosphate synthase large chain">
    <location>
        <begin position="1"/>
        <end position="1096"/>
    </location>
</feature>
<feature type="domain" description="ATP-grasp 1" evidence="1">
    <location>
        <begin position="133"/>
        <end position="328"/>
    </location>
</feature>
<feature type="domain" description="ATP-grasp 2" evidence="1">
    <location>
        <begin position="676"/>
        <end position="870"/>
    </location>
</feature>
<feature type="domain" description="MGS-like" evidence="1">
    <location>
        <begin position="951"/>
        <end position="1095"/>
    </location>
</feature>
<feature type="region of interest" description="Carboxyphosphate synthetic domain" evidence="1">
    <location>
        <begin position="1"/>
        <end position="402"/>
    </location>
</feature>
<feature type="region of interest" description="Oligomerization domain" evidence="1">
    <location>
        <begin position="403"/>
        <end position="547"/>
    </location>
</feature>
<feature type="region of interest" description="Carbamoyl phosphate synthetic domain" evidence="1">
    <location>
        <begin position="548"/>
        <end position="950"/>
    </location>
</feature>
<feature type="region of interest" description="Allosteric domain" evidence="1">
    <location>
        <begin position="951"/>
        <end position="1096"/>
    </location>
</feature>
<feature type="binding site" evidence="1">
    <location>
        <position position="129"/>
    </location>
    <ligand>
        <name>ATP</name>
        <dbReference type="ChEBI" id="CHEBI:30616"/>
        <label>1</label>
    </ligand>
</feature>
<feature type="binding site" evidence="1">
    <location>
        <position position="169"/>
    </location>
    <ligand>
        <name>ATP</name>
        <dbReference type="ChEBI" id="CHEBI:30616"/>
        <label>1</label>
    </ligand>
</feature>
<feature type="binding site" evidence="1">
    <location>
        <position position="175"/>
    </location>
    <ligand>
        <name>ATP</name>
        <dbReference type="ChEBI" id="CHEBI:30616"/>
        <label>1</label>
    </ligand>
</feature>
<feature type="binding site" evidence="1">
    <location>
        <position position="176"/>
    </location>
    <ligand>
        <name>ATP</name>
        <dbReference type="ChEBI" id="CHEBI:30616"/>
        <label>1</label>
    </ligand>
</feature>
<feature type="binding site" evidence="1">
    <location>
        <position position="208"/>
    </location>
    <ligand>
        <name>ATP</name>
        <dbReference type="ChEBI" id="CHEBI:30616"/>
        <label>1</label>
    </ligand>
</feature>
<feature type="binding site" evidence="1">
    <location>
        <position position="210"/>
    </location>
    <ligand>
        <name>ATP</name>
        <dbReference type="ChEBI" id="CHEBI:30616"/>
        <label>1</label>
    </ligand>
</feature>
<feature type="binding site" evidence="1">
    <location>
        <position position="215"/>
    </location>
    <ligand>
        <name>ATP</name>
        <dbReference type="ChEBI" id="CHEBI:30616"/>
        <label>1</label>
    </ligand>
</feature>
<feature type="binding site" evidence="1">
    <location>
        <position position="241"/>
    </location>
    <ligand>
        <name>ATP</name>
        <dbReference type="ChEBI" id="CHEBI:30616"/>
        <label>1</label>
    </ligand>
</feature>
<feature type="binding site" evidence="1">
    <location>
        <position position="242"/>
    </location>
    <ligand>
        <name>ATP</name>
        <dbReference type="ChEBI" id="CHEBI:30616"/>
        <label>1</label>
    </ligand>
</feature>
<feature type="binding site" evidence="1">
    <location>
        <position position="243"/>
    </location>
    <ligand>
        <name>ATP</name>
        <dbReference type="ChEBI" id="CHEBI:30616"/>
        <label>1</label>
    </ligand>
</feature>
<feature type="binding site" evidence="1">
    <location>
        <position position="285"/>
    </location>
    <ligand>
        <name>ATP</name>
        <dbReference type="ChEBI" id="CHEBI:30616"/>
        <label>1</label>
    </ligand>
</feature>
<feature type="binding site" evidence="1">
    <location>
        <position position="285"/>
    </location>
    <ligand>
        <name>Mg(2+)</name>
        <dbReference type="ChEBI" id="CHEBI:18420"/>
        <label>1</label>
    </ligand>
</feature>
<feature type="binding site" evidence="1">
    <location>
        <position position="285"/>
    </location>
    <ligand>
        <name>Mn(2+)</name>
        <dbReference type="ChEBI" id="CHEBI:29035"/>
        <label>1</label>
    </ligand>
</feature>
<feature type="binding site" evidence="1">
    <location>
        <position position="299"/>
    </location>
    <ligand>
        <name>ATP</name>
        <dbReference type="ChEBI" id="CHEBI:30616"/>
        <label>1</label>
    </ligand>
</feature>
<feature type="binding site" evidence="1">
    <location>
        <position position="299"/>
    </location>
    <ligand>
        <name>Mg(2+)</name>
        <dbReference type="ChEBI" id="CHEBI:18420"/>
        <label>1</label>
    </ligand>
</feature>
<feature type="binding site" evidence="1">
    <location>
        <position position="299"/>
    </location>
    <ligand>
        <name>Mg(2+)</name>
        <dbReference type="ChEBI" id="CHEBI:18420"/>
        <label>2</label>
    </ligand>
</feature>
<feature type="binding site" evidence="1">
    <location>
        <position position="299"/>
    </location>
    <ligand>
        <name>Mn(2+)</name>
        <dbReference type="ChEBI" id="CHEBI:29035"/>
        <label>1</label>
    </ligand>
</feature>
<feature type="binding site" evidence="1">
    <location>
        <position position="299"/>
    </location>
    <ligand>
        <name>Mn(2+)</name>
        <dbReference type="ChEBI" id="CHEBI:29035"/>
        <label>2</label>
    </ligand>
</feature>
<feature type="binding site" evidence="1">
    <location>
        <position position="301"/>
    </location>
    <ligand>
        <name>Mg(2+)</name>
        <dbReference type="ChEBI" id="CHEBI:18420"/>
        <label>2</label>
    </ligand>
</feature>
<feature type="binding site" evidence="1">
    <location>
        <position position="301"/>
    </location>
    <ligand>
        <name>Mn(2+)</name>
        <dbReference type="ChEBI" id="CHEBI:29035"/>
        <label>2</label>
    </ligand>
</feature>
<feature type="binding site" evidence="1">
    <location>
        <position position="712"/>
    </location>
    <ligand>
        <name>ATP</name>
        <dbReference type="ChEBI" id="CHEBI:30616"/>
        <label>2</label>
    </ligand>
</feature>
<feature type="binding site" evidence="1">
    <location>
        <position position="754"/>
    </location>
    <ligand>
        <name>ATP</name>
        <dbReference type="ChEBI" id="CHEBI:30616"/>
        <label>2</label>
    </ligand>
</feature>
<feature type="binding site" evidence="1">
    <location>
        <position position="756"/>
    </location>
    <ligand>
        <name>ATP</name>
        <dbReference type="ChEBI" id="CHEBI:30616"/>
        <label>2</label>
    </ligand>
</feature>
<feature type="binding site" evidence="1">
    <location>
        <position position="761"/>
    </location>
    <ligand>
        <name>ATP</name>
        <dbReference type="ChEBI" id="CHEBI:30616"/>
        <label>2</label>
    </ligand>
</feature>
<feature type="binding site" evidence="1">
    <location>
        <position position="786"/>
    </location>
    <ligand>
        <name>ATP</name>
        <dbReference type="ChEBI" id="CHEBI:30616"/>
        <label>2</label>
    </ligand>
</feature>
<feature type="binding site" evidence="1">
    <location>
        <position position="787"/>
    </location>
    <ligand>
        <name>ATP</name>
        <dbReference type="ChEBI" id="CHEBI:30616"/>
        <label>2</label>
    </ligand>
</feature>
<feature type="binding site" evidence="1">
    <location>
        <position position="788"/>
    </location>
    <ligand>
        <name>ATP</name>
        <dbReference type="ChEBI" id="CHEBI:30616"/>
        <label>2</label>
    </ligand>
</feature>
<feature type="binding site" evidence="1">
    <location>
        <position position="789"/>
    </location>
    <ligand>
        <name>ATP</name>
        <dbReference type="ChEBI" id="CHEBI:30616"/>
        <label>2</label>
    </ligand>
</feature>
<feature type="binding site" evidence="1">
    <location>
        <position position="829"/>
    </location>
    <ligand>
        <name>ATP</name>
        <dbReference type="ChEBI" id="CHEBI:30616"/>
        <label>2</label>
    </ligand>
</feature>
<feature type="binding site" evidence="1">
    <location>
        <position position="829"/>
    </location>
    <ligand>
        <name>Mg(2+)</name>
        <dbReference type="ChEBI" id="CHEBI:18420"/>
        <label>3</label>
    </ligand>
</feature>
<feature type="binding site" evidence="1">
    <location>
        <position position="829"/>
    </location>
    <ligand>
        <name>Mn(2+)</name>
        <dbReference type="ChEBI" id="CHEBI:29035"/>
        <label>3</label>
    </ligand>
</feature>
<feature type="binding site" evidence="1">
    <location>
        <position position="841"/>
    </location>
    <ligand>
        <name>ATP</name>
        <dbReference type="ChEBI" id="CHEBI:30616"/>
        <label>2</label>
    </ligand>
</feature>
<feature type="binding site" evidence="1">
    <location>
        <position position="841"/>
    </location>
    <ligand>
        <name>Mg(2+)</name>
        <dbReference type="ChEBI" id="CHEBI:18420"/>
        <label>3</label>
    </ligand>
</feature>
<feature type="binding site" evidence="1">
    <location>
        <position position="841"/>
    </location>
    <ligand>
        <name>Mg(2+)</name>
        <dbReference type="ChEBI" id="CHEBI:18420"/>
        <label>4</label>
    </ligand>
</feature>
<feature type="binding site" evidence="1">
    <location>
        <position position="841"/>
    </location>
    <ligand>
        <name>Mn(2+)</name>
        <dbReference type="ChEBI" id="CHEBI:29035"/>
        <label>3</label>
    </ligand>
</feature>
<feature type="binding site" evidence="1">
    <location>
        <position position="841"/>
    </location>
    <ligand>
        <name>Mn(2+)</name>
        <dbReference type="ChEBI" id="CHEBI:29035"/>
        <label>4</label>
    </ligand>
</feature>
<feature type="binding site" evidence="1">
    <location>
        <position position="843"/>
    </location>
    <ligand>
        <name>Mg(2+)</name>
        <dbReference type="ChEBI" id="CHEBI:18420"/>
        <label>4</label>
    </ligand>
</feature>
<feature type="binding site" evidence="1">
    <location>
        <position position="843"/>
    </location>
    <ligand>
        <name>Mn(2+)</name>
        <dbReference type="ChEBI" id="CHEBI:29035"/>
        <label>4</label>
    </ligand>
</feature>
<sequence>MPKRDDINSVLVIGSGPIVIGQAAEFDYSGTQACRVLREEGVRVILVNSNPATIMTDPGFADATYIEPITSEVLEKIIIKERPDAVLPTLGGQTALNAAIRLDELGILAKHGVELIGAKVEAIQKGEDRQLFKDLVIESGADVARSHVAKTLEQAVEFAEDLGYPLVIRPSFTMGGLGSGFAHTRQELERMVADGLQSSPTTEVLLEESILGWKEYELELMRDTADNTVVVCSIENVDPVGVHTGDSITVAPALTLTDREYQHMRDIGIDIIRRVGVDTGGCNIQFAVDPTNGRLIVIEMNPRVSRSSALASKATGFPIAKIAAKLAIGYRLDEIPNDITKVTPASFEPTLDYVVVKVPRFAFEKFPAADAELTTTMKSVGEAMAIGRNYSTALQKALRSLEKRGSSFHWGAESRSVEELLETSRIPTDGRIVTVQQALRAGATPEQVFDATKIDPWFIDQIVLINEVADAVRDADELDAPTLREAKDHGFSDAQIAEIRGIGEQEVRDARHAAGIRPVFKTVDTCAGEFPALTPYHYSSYDSETEIVPSDRRKVIILGSGPNRIGQGIEFDYSCVHASFALADAGFETIMINCNPETVSTDYDTSDRLYFEPLTLEDVLEIVHVEQQAGELVGVVVQLGGQTALGLAKGLEAAGVPILGTSPSAIDLAEERGLFSGILDAAGLVAPRNGTAVAIDEAVVVAEEIGYPVLVRPSYVLGGRGMEIVFDTATLHDYFLRMADQGIIGEGKPLLIDRFLDDAIEIDIDAIYDGTELYVGGVMEHIEEAGIHSGDSSCTLPPVTLGRGQIQQVVDATRAIAEGVGVRGLLNVQFAIGAGVLYVLEANPRASRTVPFVSKALGIPLAKAASLVMVGTSIAELKASGLLPERDGSDVPMDSPVAVKEAVLPFKRFRTKDGLIVDSVLGPEMRSTGEVMGIDRDFPRAFAKSQEAAFGGLPLSGTVFVSVADRDKRSIVLPVLRLQQLGFEVLATAGTAEILSRNGIQARVVRKYSEEPAAGDSPSIVDLINRDEVDVVINTPSGRTARADGYEIRAAAVAADKPLFTTIAQLTAAVASFDAIRAGFDVTSLQDYAIAREARR</sequence>
<reference key="1">
    <citation type="journal article" date="2008" name="J. Bacteriol.">
        <title>Genome of the actinomycete plant pathogen Clavibacter michiganensis subsp. sepedonicus suggests recent niche adaptation.</title>
        <authorList>
            <person name="Bentley S.D."/>
            <person name="Corton C."/>
            <person name="Brown S.E."/>
            <person name="Barron A."/>
            <person name="Clark L."/>
            <person name="Doggett J."/>
            <person name="Harris B."/>
            <person name="Ormond D."/>
            <person name="Quail M.A."/>
            <person name="May G."/>
            <person name="Francis D."/>
            <person name="Knudson D."/>
            <person name="Parkhill J."/>
            <person name="Ishimaru C.A."/>
        </authorList>
    </citation>
    <scope>NUCLEOTIDE SEQUENCE [LARGE SCALE GENOMIC DNA]</scope>
    <source>
        <strain>ATCC 33113 / DSM 20744 / JCM 9667 / LMG 2889 / ICMP 2535 / C-1</strain>
    </source>
</reference>
<dbReference type="EC" id="6.3.4.16" evidence="1"/>
<dbReference type="EC" id="6.3.5.5" evidence="1"/>
<dbReference type="EMBL" id="AM849034">
    <property type="protein sequence ID" value="CAQ02125.1"/>
    <property type="molecule type" value="Genomic_DNA"/>
</dbReference>
<dbReference type="RefSeq" id="WP_012299351.1">
    <property type="nucleotide sequence ID" value="NZ_MZMN01000003.1"/>
</dbReference>
<dbReference type="SMR" id="B0REV9"/>
<dbReference type="STRING" id="31964.CMS2029"/>
<dbReference type="KEGG" id="cms:CMS2029"/>
<dbReference type="eggNOG" id="COG0458">
    <property type="taxonomic scope" value="Bacteria"/>
</dbReference>
<dbReference type="HOGENOM" id="CLU_000513_1_0_11"/>
<dbReference type="OrthoDB" id="9804197at2"/>
<dbReference type="UniPathway" id="UPA00068">
    <property type="reaction ID" value="UER00171"/>
</dbReference>
<dbReference type="UniPathway" id="UPA00070">
    <property type="reaction ID" value="UER00115"/>
</dbReference>
<dbReference type="Proteomes" id="UP000001318">
    <property type="component" value="Chromosome"/>
</dbReference>
<dbReference type="GO" id="GO:0005737">
    <property type="term" value="C:cytoplasm"/>
    <property type="evidence" value="ECO:0007669"/>
    <property type="project" value="TreeGrafter"/>
</dbReference>
<dbReference type="GO" id="GO:0005524">
    <property type="term" value="F:ATP binding"/>
    <property type="evidence" value="ECO:0007669"/>
    <property type="project" value="UniProtKB-UniRule"/>
</dbReference>
<dbReference type="GO" id="GO:0004087">
    <property type="term" value="F:carbamoyl-phosphate synthase (ammonia) activity"/>
    <property type="evidence" value="ECO:0007669"/>
    <property type="project" value="RHEA"/>
</dbReference>
<dbReference type="GO" id="GO:0004088">
    <property type="term" value="F:carbamoyl-phosphate synthase (glutamine-hydrolyzing) activity"/>
    <property type="evidence" value="ECO:0007669"/>
    <property type="project" value="UniProtKB-UniRule"/>
</dbReference>
<dbReference type="GO" id="GO:0046872">
    <property type="term" value="F:metal ion binding"/>
    <property type="evidence" value="ECO:0007669"/>
    <property type="project" value="UniProtKB-KW"/>
</dbReference>
<dbReference type="GO" id="GO:0044205">
    <property type="term" value="P:'de novo' UMP biosynthetic process"/>
    <property type="evidence" value="ECO:0007669"/>
    <property type="project" value="UniProtKB-UniRule"/>
</dbReference>
<dbReference type="GO" id="GO:0006541">
    <property type="term" value="P:glutamine metabolic process"/>
    <property type="evidence" value="ECO:0007669"/>
    <property type="project" value="TreeGrafter"/>
</dbReference>
<dbReference type="GO" id="GO:0006526">
    <property type="term" value="P:L-arginine biosynthetic process"/>
    <property type="evidence" value="ECO:0007669"/>
    <property type="project" value="UniProtKB-UniRule"/>
</dbReference>
<dbReference type="CDD" id="cd01424">
    <property type="entry name" value="MGS_CPS_II"/>
    <property type="match status" value="1"/>
</dbReference>
<dbReference type="FunFam" id="1.10.1030.10:FF:000002">
    <property type="entry name" value="Carbamoyl-phosphate synthase large chain"/>
    <property type="match status" value="1"/>
</dbReference>
<dbReference type="FunFam" id="3.30.470.20:FF:000007">
    <property type="entry name" value="Carbamoyl-phosphate synthase large chain"/>
    <property type="match status" value="1"/>
</dbReference>
<dbReference type="FunFam" id="3.30.470.20:FF:000014">
    <property type="entry name" value="Carbamoyl-phosphate synthase large chain"/>
    <property type="match status" value="1"/>
</dbReference>
<dbReference type="FunFam" id="3.40.50.20:FF:000001">
    <property type="entry name" value="Carbamoyl-phosphate synthase large chain"/>
    <property type="match status" value="1"/>
</dbReference>
<dbReference type="FunFam" id="3.40.50.20:FF:000003">
    <property type="entry name" value="Carbamoyl-phosphate synthase large chain"/>
    <property type="match status" value="1"/>
</dbReference>
<dbReference type="Gene3D" id="3.40.50.20">
    <property type="match status" value="2"/>
</dbReference>
<dbReference type="Gene3D" id="3.30.1490.20">
    <property type="entry name" value="ATP-grasp fold, A domain"/>
    <property type="match status" value="1"/>
</dbReference>
<dbReference type="Gene3D" id="3.30.470.20">
    <property type="entry name" value="ATP-grasp fold, B domain"/>
    <property type="match status" value="2"/>
</dbReference>
<dbReference type="Gene3D" id="1.10.1030.10">
    <property type="entry name" value="Carbamoyl-phosphate synthetase, large subunit oligomerisation domain"/>
    <property type="match status" value="1"/>
</dbReference>
<dbReference type="Gene3D" id="3.40.50.1380">
    <property type="entry name" value="Methylglyoxal synthase-like domain"/>
    <property type="match status" value="1"/>
</dbReference>
<dbReference type="HAMAP" id="MF_01210_B">
    <property type="entry name" value="CPSase_L_chain_B"/>
    <property type="match status" value="1"/>
</dbReference>
<dbReference type="InterPro" id="IPR011761">
    <property type="entry name" value="ATP-grasp"/>
</dbReference>
<dbReference type="InterPro" id="IPR013815">
    <property type="entry name" value="ATP_grasp_subdomain_1"/>
</dbReference>
<dbReference type="InterPro" id="IPR006275">
    <property type="entry name" value="CarbamoylP_synth_lsu"/>
</dbReference>
<dbReference type="InterPro" id="IPR005480">
    <property type="entry name" value="CarbamoylP_synth_lsu_oligo"/>
</dbReference>
<dbReference type="InterPro" id="IPR036897">
    <property type="entry name" value="CarbamoylP_synth_lsu_oligo_sf"/>
</dbReference>
<dbReference type="InterPro" id="IPR005479">
    <property type="entry name" value="CbamoylP_synth_lsu-like_ATP-bd"/>
</dbReference>
<dbReference type="InterPro" id="IPR005483">
    <property type="entry name" value="CbamoylP_synth_lsu_CPSase_dom"/>
</dbReference>
<dbReference type="InterPro" id="IPR011607">
    <property type="entry name" value="MGS-like_dom"/>
</dbReference>
<dbReference type="InterPro" id="IPR036914">
    <property type="entry name" value="MGS-like_dom_sf"/>
</dbReference>
<dbReference type="InterPro" id="IPR033937">
    <property type="entry name" value="MGS_CPS_CarB"/>
</dbReference>
<dbReference type="InterPro" id="IPR016185">
    <property type="entry name" value="PreATP-grasp_dom_sf"/>
</dbReference>
<dbReference type="NCBIfam" id="TIGR01369">
    <property type="entry name" value="CPSaseII_lrg"/>
    <property type="match status" value="1"/>
</dbReference>
<dbReference type="NCBIfam" id="NF003671">
    <property type="entry name" value="PRK05294.1"/>
    <property type="match status" value="1"/>
</dbReference>
<dbReference type="NCBIfam" id="NF009455">
    <property type="entry name" value="PRK12815.1"/>
    <property type="match status" value="1"/>
</dbReference>
<dbReference type="PANTHER" id="PTHR11405:SF53">
    <property type="entry name" value="CARBAMOYL-PHOSPHATE SYNTHASE [AMMONIA], MITOCHONDRIAL"/>
    <property type="match status" value="1"/>
</dbReference>
<dbReference type="PANTHER" id="PTHR11405">
    <property type="entry name" value="CARBAMOYLTRANSFERASE FAMILY MEMBER"/>
    <property type="match status" value="1"/>
</dbReference>
<dbReference type="Pfam" id="PF02786">
    <property type="entry name" value="CPSase_L_D2"/>
    <property type="match status" value="2"/>
</dbReference>
<dbReference type="Pfam" id="PF02787">
    <property type="entry name" value="CPSase_L_D3"/>
    <property type="match status" value="1"/>
</dbReference>
<dbReference type="Pfam" id="PF02142">
    <property type="entry name" value="MGS"/>
    <property type="match status" value="1"/>
</dbReference>
<dbReference type="PRINTS" id="PR00098">
    <property type="entry name" value="CPSASE"/>
</dbReference>
<dbReference type="SMART" id="SM01096">
    <property type="entry name" value="CPSase_L_D3"/>
    <property type="match status" value="1"/>
</dbReference>
<dbReference type="SMART" id="SM00851">
    <property type="entry name" value="MGS"/>
    <property type="match status" value="1"/>
</dbReference>
<dbReference type="SUPFAM" id="SSF48108">
    <property type="entry name" value="Carbamoyl phosphate synthetase, large subunit connection domain"/>
    <property type="match status" value="1"/>
</dbReference>
<dbReference type="SUPFAM" id="SSF56059">
    <property type="entry name" value="Glutathione synthetase ATP-binding domain-like"/>
    <property type="match status" value="2"/>
</dbReference>
<dbReference type="SUPFAM" id="SSF52335">
    <property type="entry name" value="Methylglyoxal synthase-like"/>
    <property type="match status" value="1"/>
</dbReference>
<dbReference type="SUPFAM" id="SSF52440">
    <property type="entry name" value="PreATP-grasp domain"/>
    <property type="match status" value="2"/>
</dbReference>
<dbReference type="PROSITE" id="PS50975">
    <property type="entry name" value="ATP_GRASP"/>
    <property type="match status" value="2"/>
</dbReference>
<dbReference type="PROSITE" id="PS00866">
    <property type="entry name" value="CPSASE_1"/>
    <property type="match status" value="2"/>
</dbReference>
<dbReference type="PROSITE" id="PS00867">
    <property type="entry name" value="CPSASE_2"/>
    <property type="match status" value="2"/>
</dbReference>
<dbReference type="PROSITE" id="PS51855">
    <property type="entry name" value="MGS"/>
    <property type="match status" value="1"/>
</dbReference>
<proteinExistence type="inferred from homology"/>
<protein>
    <recommendedName>
        <fullName evidence="1">Carbamoyl phosphate synthase large chain</fullName>
        <ecNumber evidence="1">6.3.4.16</ecNumber>
        <ecNumber evidence="1">6.3.5.5</ecNumber>
    </recommendedName>
    <alternativeName>
        <fullName evidence="1">Carbamoyl phosphate synthetase ammonia chain</fullName>
    </alternativeName>
</protein>
<comment type="function">
    <text evidence="1">Large subunit of the glutamine-dependent carbamoyl phosphate synthetase (CPSase). CPSase catalyzes the formation of carbamoyl phosphate from the ammonia moiety of glutamine, carbonate, and phosphate donated by ATP, constituting the first step of 2 biosynthetic pathways, one leading to arginine and/or urea and the other to pyrimidine nucleotides. The large subunit (synthetase) binds the substrates ammonia (free or transferred from glutamine from the small subunit), hydrogencarbonate and ATP and carries out an ATP-coupled ligase reaction, activating hydrogencarbonate by forming carboxy phosphate which reacts with ammonia to form carbamoyl phosphate.</text>
</comment>
<comment type="catalytic activity">
    <reaction evidence="1">
        <text>hydrogencarbonate + L-glutamine + 2 ATP + H2O = carbamoyl phosphate + L-glutamate + 2 ADP + phosphate + 2 H(+)</text>
        <dbReference type="Rhea" id="RHEA:18633"/>
        <dbReference type="ChEBI" id="CHEBI:15377"/>
        <dbReference type="ChEBI" id="CHEBI:15378"/>
        <dbReference type="ChEBI" id="CHEBI:17544"/>
        <dbReference type="ChEBI" id="CHEBI:29985"/>
        <dbReference type="ChEBI" id="CHEBI:30616"/>
        <dbReference type="ChEBI" id="CHEBI:43474"/>
        <dbReference type="ChEBI" id="CHEBI:58228"/>
        <dbReference type="ChEBI" id="CHEBI:58359"/>
        <dbReference type="ChEBI" id="CHEBI:456216"/>
        <dbReference type="EC" id="6.3.5.5"/>
    </reaction>
</comment>
<comment type="catalytic activity">
    <molecule>Carbamoyl phosphate synthase large chain</molecule>
    <reaction evidence="1">
        <text>hydrogencarbonate + NH4(+) + 2 ATP = carbamoyl phosphate + 2 ADP + phosphate + 2 H(+)</text>
        <dbReference type="Rhea" id="RHEA:18029"/>
        <dbReference type="ChEBI" id="CHEBI:15378"/>
        <dbReference type="ChEBI" id="CHEBI:17544"/>
        <dbReference type="ChEBI" id="CHEBI:28938"/>
        <dbReference type="ChEBI" id="CHEBI:30616"/>
        <dbReference type="ChEBI" id="CHEBI:43474"/>
        <dbReference type="ChEBI" id="CHEBI:58228"/>
        <dbReference type="ChEBI" id="CHEBI:456216"/>
        <dbReference type="EC" id="6.3.4.16"/>
    </reaction>
</comment>
<comment type="cofactor">
    <cofactor evidence="1">
        <name>Mg(2+)</name>
        <dbReference type="ChEBI" id="CHEBI:18420"/>
    </cofactor>
    <cofactor evidence="1">
        <name>Mn(2+)</name>
        <dbReference type="ChEBI" id="CHEBI:29035"/>
    </cofactor>
    <text evidence="1">Binds 4 Mg(2+) or Mn(2+) ions per subunit.</text>
</comment>
<comment type="pathway">
    <text evidence="1">Amino-acid biosynthesis; L-arginine biosynthesis; carbamoyl phosphate from bicarbonate: step 1/1.</text>
</comment>
<comment type="pathway">
    <text evidence="1">Pyrimidine metabolism; UMP biosynthesis via de novo pathway; (S)-dihydroorotate from bicarbonate: step 1/3.</text>
</comment>
<comment type="subunit">
    <text evidence="1">Composed of two chains; the small (or glutamine) chain promotes the hydrolysis of glutamine to ammonia, which is used by the large (or ammonia) chain to synthesize carbamoyl phosphate. Tetramer of heterodimers (alpha,beta)4.</text>
</comment>
<comment type="domain">
    <text evidence="1">The large subunit is composed of 2 ATP-grasp domains that are involved in binding the 2 ATP molecules needed for carbamoyl phosphate synthesis. The N-terminal ATP-grasp domain (referred to as the carboxyphosphate synthetic component) catalyzes the ATP-dependent phosphorylation of hydrogencarbonate to carboxyphosphate and the subsequent nucleophilic attack by ammonia to form a carbamate intermediate. The C-terminal ATP-grasp domain (referred to as the carbamoyl phosphate synthetic component) then catalyzes the phosphorylation of carbamate with the second ATP to form the end product carbamoyl phosphate. The reactive and unstable enzyme intermediates are sequentially channeled from one active site to the next through the interior of the protein over a distance of at least 96 A.</text>
</comment>
<comment type="similarity">
    <text evidence="1">Belongs to the CarB family.</text>
</comment>
<accession>B0REV9</accession>
<gene>
    <name evidence="1" type="primary">carB</name>
    <name type="ordered locus">CMS2029</name>
</gene>
<keyword id="KW-0028">Amino-acid biosynthesis</keyword>
<keyword id="KW-0055">Arginine biosynthesis</keyword>
<keyword id="KW-0067">ATP-binding</keyword>
<keyword id="KW-0436">Ligase</keyword>
<keyword id="KW-0460">Magnesium</keyword>
<keyword id="KW-0464">Manganese</keyword>
<keyword id="KW-0479">Metal-binding</keyword>
<keyword id="KW-0547">Nucleotide-binding</keyword>
<keyword id="KW-0665">Pyrimidine biosynthesis</keyword>
<keyword id="KW-0677">Repeat</keyword>
<evidence type="ECO:0000255" key="1">
    <source>
        <dbReference type="HAMAP-Rule" id="MF_01210"/>
    </source>
</evidence>
<organism>
    <name type="scientific">Clavibacter sepedonicus</name>
    <name type="common">Clavibacter michiganensis subsp. sepedonicus</name>
    <dbReference type="NCBI Taxonomy" id="31964"/>
    <lineage>
        <taxon>Bacteria</taxon>
        <taxon>Bacillati</taxon>
        <taxon>Actinomycetota</taxon>
        <taxon>Actinomycetes</taxon>
        <taxon>Micrococcales</taxon>
        <taxon>Microbacteriaceae</taxon>
        <taxon>Clavibacter</taxon>
    </lineage>
</organism>